<feature type="chain" id="PRO_1000127492" description="D-aminoacyl-tRNA deacylase">
    <location>
        <begin position="1"/>
        <end position="146"/>
    </location>
</feature>
<feature type="short sequence motif" description="Gly-cisPro motif, important for rejection of L-amino acids" evidence="1">
    <location>
        <begin position="137"/>
        <end position="138"/>
    </location>
</feature>
<comment type="function">
    <text evidence="1">An aminoacyl-tRNA editing enzyme that deacylates mischarged D-aminoacyl-tRNAs. Also deacylates mischarged glycyl-tRNA(Ala), protecting cells against glycine mischarging by AlaRS. Acts via tRNA-based rather than protein-based catalysis; rejects L-amino acids rather than detecting D-amino acids in the active site. By recycling D-aminoacyl-tRNA to D-amino acids and free tRNA molecules, this enzyme counteracts the toxicity associated with the formation of D-aminoacyl-tRNA entities in vivo and helps enforce protein L-homochirality.</text>
</comment>
<comment type="catalytic activity">
    <reaction evidence="1">
        <text>glycyl-tRNA(Ala) + H2O = tRNA(Ala) + glycine + H(+)</text>
        <dbReference type="Rhea" id="RHEA:53744"/>
        <dbReference type="Rhea" id="RHEA-COMP:9657"/>
        <dbReference type="Rhea" id="RHEA-COMP:13640"/>
        <dbReference type="ChEBI" id="CHEBI:15377"/>
        <dbReference type="ChEBI" id="CHEBI:15378"/>
        <dbReference type="ChEBI" id="CHEBI:57305"/>
        <dbReference type="ChEBI" id="CHEBI:78442"/>
        <dbReference type="ChEBI" id="CHEBI:78522"/>
        <dbReference type="EC" id="3.1.1.96"/>
    </reaction>
</comment>
<comment type="catalytic activity">
    <reaction evidence="1">
        <text>a D-aminoacyl-tRNA + H2O = a tRNA + a D-alpha-amino acid + H(+)</text>
        <dbReference type="Rhea" id="RHEA:13953"/>
        <dbReference type="Rhea" id="RHEA-COMP:10123"/>
        <dbReference type="Rhea" id="RHEA-COMP:10124"/>
        <dbReference type="ChEBI" id="CHEBI:15377"/>
        <dbReference type="ChEBI" id="CHEBI:15378"/>
        <dbReference type="ChEBI" id="CHEBI:59871"/>
        <dbReference type="ChEBI" id="CHEBI:78442"/>
        <dbReference type="ChEBI" id="CHEBI:79333"/>
        <dbReference type="EC" id="3.1.1.96"/>
    </reaction>
</comment>
<comment type="subunit">
    <text evidence="1">Homodimer.</text>
</comment>
<comment type="subcellular location">
    <subcellularLocation>
        <location evidence="1">Cytoplasm</location>
    </subcellularLocation>
</comment>
<comment type="domain">
    <text evidence="1">A Gly-cisPro motif from one monomer fits into the active site of the other monomer to allow specific chiral rejection of L-amino acids.</text>
</comment>
<comment type="similarity">
    <text evidence="1">Belongs to the DTD family.</text>
</comment>
<evidence type="ECO:0000255" key="1">
    <source>
        <dbReference type="HAMAP-Rule" id="MF_00518"/>
    </source>
</evidence>
<dbReference type="EC" id="3.1.1.96" evidence="1"/>
<dbReference type="EMBL" id="CP001186">
    <property type="protein sequence ID" value="ACK93305.1"/>
    <property type="molecule type" value="Genomic_DNA"/>
</dbReference>
<dbReference type="RefSeq" id="WP_001266969.1">
    <property type="nucleotide sequence ID" value="NC_011772.1"/>
</dbReference>
<dbReference type="SMR" id="B7IIR8"/>
<dbReference type="KEGG" id="bcg:BCG9842_B0710"/>
<dbReference type="HOGENOM" id="CLU_076901_1_0_9"/>
<dbReference type="Proteomes" id="UP000006744">
    <property type="component" value="Chromosome"/>
</dbReference>
<dbReference type="GO" id="GO:0005737">
    <property type="term" value="C:cytoplasm"/>
    <property type="evidence" value="ECO:0007669"/>
    <property type="project" value="UniProtKB-SubCell"/>
</dbReference>
<dbReference type="GO" id="GO:0051500">
    <property type="term" value="F:D-tyrosyl-tRNA(Tyr) deacylase activity"/>
    <property type="evidence" value="ECO:0007669"/>
    <property type="project" value="TreeGrafter"/>
</dbReference>
<dbReference type="GO" id="GO:0106026">
    <property type="term" value="F:Gly-tRNA(Ala) deacylase activity"/>
    <property type="evidence" value="ECO:0007669"/>
    <property type="project" value="UniProtKB-UniRule"/>
</dbReference>
<dbReference type="GO" id="GO:0043908">
    <property type="term" value="F:Ser(Gly)-tRNA(Ala) hydrolase activity"/>
    <property type="evidence" value="ECO:0007669"/>
    <property type="project" value="UniProtKB-UniRule"/>
</dbReference>
<dbReference type="GO" id="GO:0000049">
    <property type="term" value="F:tRNA binding"/>
    <property type="evidence" value="ECO:0007669"/>
    <property type="project" value="UniProtKB-UniRule"/>
</dbReference>
<dbReference type="GO" id="GO:0019478">
    <property type="term" value="P:D-amino acid catabolic process"/>
    <property type="evidence" value="ECO:0007669"/>
    <property type="project" value="UniProtKB-UniRule"/>
</dbReference>
<dbReference type="CDD" id="cd00563">
    <property type="entry name" value="Dtyr_deacylase"/>
    <property type="match status" value="1"/>
</dbReference>
<dbReference type="FunFam" id="3.50.80.10:FF:000001">
    <property type="entry name" value="D-aminoacyl-tRNA deacylase"/>
    <property type="match status" value="1"/>
</dbReference>
<dbReference type="Gene3D" id="3.50.80.10">
    <property type="entry name" value="D-tyrosyl-tRNA(Tyr) deacylase"/>
    <property type="match status" value="1"/>
</dbReference>
<dbReference type="HAMAP" id="MF_00518">
    <property type="entry name" value="Deacylase_Dtd"/>
    <property type="match status" value="1"/>
</dbReference>
<dbReference type="InterPro" id="IPR003732">
    <property type="entry name" value="Daa-tRNA_deacyls_DTD"/>
</dbReference>
<dbReference type="InterPro" id="IPR023509">
    <property type="entry name" value="DTD-like_sf"/>
</dbReference>
<dbReference type="NCBIfam" id="TIGR00256">
    <property type="entry name" value="D-aminoacyl-tRNA deacylase"/>
    <property type="match status" value="1"/>
</dbReference>
<dbReference type="PANTHER" id="PTHR10472:SF5">
    <property type="entry name" value="D-AMINOACYL-TRNA DEACYLASE 1"/>
    <property type="match status" value="1"/>
</dbReference>
<dbReference type="PANTHER" id="PTHR10472">
    <property type="entry name" value="D-TYROSYL-TRNA TYR DEACYLASE"/>
    <property type="match status" value="1"/>
</dbReference>
<dbReference type="Pfam" id="PF02580">
    <property type="entry name" value="Tyr_Deacylase"/>
    <property type="match status" value="1"/>
</dbReference>
<dbReference type="SUPFAM" id="SSF69500">
    <property type="entry name" value="DTD-like"/>
    <property type="match status" value="1"/>
</dbReference>
<proteinExistence type="inferred from homology"/>
<gene>
    <name evidence="1" type="primary">dtd</name>
    <name type="ordered locus">BCG9842_B0710</name>
</gene>
<protein>
    <recommendedName>
        <fullName evidence="1">D-aminoacyl-tRNA deacylase</fullName>
        <shortName evidence="1">DTD</shortName>
        <ecNumber evidence="1">3.1.1.96</ecNumber>
    </recommendedName>
    <alternativeName>
        <fullName evidence="1">Gly-tRNA(Ala) deacylase</fullName>
    </alternativeName>
</protein>
<reference key="1">
    <citation type="submission" date="2008-10" db="EMBL/GenBank/DDBJ databases">
        <title>Genome sequence of Bacillus cereus G9842.</title>
        <authorList>
            <person name="Dodson R.J."/>
            <person name="Durkin A.S."/>
            <person name="Rosovitz M.J."/>
            <person name="Rasko D.A."/>
            <person name="Hoffmaster A."/>
            <person name="Ravel J."/>
            <person name="Sutton G."/>
        </authorList>
    </citation>
    <scope>NUCLEOTIDE SEQUENCE [LARGE SCALE GENOMIC DNA]</scope>
    <source>
        <strain>G9842</strain>
    </source>
</reference>
<organism>
    <name type="scientific">Bacillus cereus (strain G9842)</name>
    <dbReference type="NCBI Taxonomy" id="405531"/>
    <lineage>
        <taxon>Bacteria</taxon>
        <taxon>Bacillati</taxon>
        <taxon>Bacillota</taxon>
        <taxon>Bacilli</taxon>
        <taxon>Bacillales</taxon>
        <taxon>Bacillaceae</taxon>
        <taxon>Bacillus</taxon>
        <taxon>Bacillus cereus group</taxon>
    </lineage>
</organism>
<sequence>MRVVLQRSKKASVTVDGEIVGQIPFGLTLLVGITHEDTEKDATYIAEKISNLRIFEDESGKMNHSVLDVEGQVLSISQFTLYGDCRKGRRPNFMDAAKPDYAERLYDFFNEEVRKQGLHVETGKFGAMMDVSLINDGPVTLIVESK</sequence>
<name>DTD_BACC2</name>
<accession>B7IIR8</accession>
<keyword id="KW-0963">Cytoplasm</keyword>
<keyword id="KW-0378">Hydrolase</keyword>
<keyword id="KW-0694">RNA-binding</keyword>
<keyword id="KW-0820">tRNA-binding</keyword>